<dbReference type="EMBL" id="CP000029">
    <property type="protein sequence ID" value="AAW55143.1"/>
    <property type="molecule type" value="Genomic_DNA"/>
</dbReference>
<dbReference type="RefSeq" id="WP_001829778.1">
    <property type="nucleotide sequence ID" value="NC_002976.3"/>
</dbReference>
<dbReference type="SMR" id="Q5HM11"/>
<dbReference type="STRING" id="176279.SERP1819"/>
<dbReference type="GeneID" id="50018085"/>
<dbReference type="KEGG" id="ser:SERP1819"/>
<dbReference type="eggNOG" id="COG0094">
    <property type="taxonomic scope" value="Bacteria"/>
</dbReference>
<dbReference type="HOGENOM" id="CLU_061015_2_1_9"/>
<dbReference type="Proteomes" id="UP000000531">
    <property type="component" value="Chromosome"/>
</dbReference>
<dbReference type="GO" id="GO:1990904">
    <property type="term" value="C:ribonucleoprotein complex"/>
    <property type="evidence" value="ECO:0007669"/>
    <property type="project" value="UniProtKB-KW"/>
</dbReference>
<dbReference type="GO" id="GO:0005840">
    <property type="term" value="C:ribosome"/>
    <property type="evidence" value="ECO:0007669"/>
    <property type="project" value="UniProtKB-KW"/>
</dbReference>
<dbReference type="GO" id="GO:0019843">
    <property type="term" value="F:rRNA binding"/>
    <property type="evidence" value="ECO:0007669"/>
    <property type="project" value="UniProtKB-UniRule"/>
</dbReference>
<dbReference type="GO" id="GO:0003735">
    <property type="term" value="F:structural constituent of ribosome"/>
    <property type="evidence" value="ECO:0007669"/>
    <property type="project" value="InterPro"/>
</dbReference>
<dbReference type="GO" id="GO:0000049">
    <property type="term" value="F:tRNA binding"/>
    <property type="evidence" value="ECO:0007669"/>
    <property type="project" value="UniProtKB-UniRule"/>
</dbReference>
<dbReference type="GO" id="GO:0006412">
    <property type="term" value="P:translation"/>
    <property type="evidence" value="ECO:0007669"/>
    <property type="project" value="UniProtKB-UniRule"/>
</dbReference>
<dbReference type="FunFam" id="3.30.1440.10:FF:000001">
    <property type="entry name" value="50S ribosomal protein L5"/>
    <property type="match status" value="1"/>
</dbReference>
<dbReference type="Gene3D" id="3.30.1440.10">
    <property type="match status" value="1"/>
</dbReference>
<dbReference type="HAMAP" id="MF_01333_B">
    <property type="entry name" value="Ribosomal_uL5_B"/>
    <property type="match status" value="1"/>
</dbReference>
<dbReference type="InterPro" id="IPR002132">
    <property type="entry name" value="Ribosomal_uL5"/>
</dbReference>
<dbReference type="InterPro" id="IPR020930">
    <property type="entry name" value="Ribosomal_uL5_bac-type"/>
</dbReference>
<dbReference type="InterPro" id="IPR031309">
    <property type="entry name" value="Ribosomal_uL5_C"/>
</dbReference>
<dbReference type="InterPro" id="IPR020929">
    <property type="entry name" value="Ribosomal_uL5_CS"/>
</dbReference>
<dbReference type="InterPro" id="IPR022803">
    <property type="entry name" value="Ribosomal_uL5_dom_sf"/>
</dbReference>
<dbReference type="InterPro" id="IPR031310">
    <property type="entry name" value="Ribosomal_uL5_N"/>
</dbReference>
<dbReference type="NCBIfam" id="NF000585">
    <property type="entry name" value="PRK00010.1"/>
    <property type="match status" value="1"/>
</dbReference>
<dbReference type="PANTHER" id="PTHR11994">
    <property type="entry name" value="60S RIBOSOMAL PROTEIN L11-RELATED"/>
    <property type="match status" value="1"/>
</dbReference>
<dbReference type="Pfam" id="PF00281">
    <property type="entry name" value="Ribosomal_L5"/>
    <property type="match status" value="1"/>
</dbReference>
<dbReference type="Pfam" id="PF00673">
    <property type="entry name" value="Ribosomal_L5_C"/>
    <property type="match status" value="1"/>
</dbReference>
<dbReference type="PIRSF" id="PIRSF002161">
    <property type="entry name" value="Ribosomal_L5"/>
    <property type="match status" value="1"/>
</dbReference>
<dbReference type="SUPFAM" id="SSF55282">
    <property type="entry name" value="RL5-like"/>
    <property type="match status" value="1"/>
</dbReference>
<dbReference type="PROSITE" id="PS00358">
    <property type="entry name" value="RIBOSOMAL_L5"/>
    <property type="match status" value="1"/>
</dbReference>
<reference key="1">
    <citation type="journal article" date="2005" name="J. Bacteriol.">
        <title>Insights on evolution of virulence and resistance from the complete genome analysis of an early methicillin-resistant Staphylococcus aureus strain and a biofilm-producing methicillin-resistant Staphylococcus epidermidis strain.</title>
        <authorList>
            <person name="Gill S.R."/>
            <person name="Fouts D.E."/>
            <person name="Archer G.L."/>
            <person name="Mongodin E.F."/>
            <person name="DeBoy R.T."/>
            <person name="Ravel J."/>
            <person name="Paulsen I.T."/>
            <person name="Kolonay J.F."/>
            <person name="Brinkac L.M."/>
            <person name="Beanan M.J."/>
            <person name="Dodson R.J."/>
            <person name="Daugherty S.C."/>
            <person name="Madupu R."/>
            <person name="Angiuoli S.V."/>
            <person name="Durkin A.S."/>
            <person name="Haft D.H."/>
            <person name="Vamathevan J.J."/>
            <person name="Khouri H."/>
            <person name="Utterback T.R."/>
            <person name="Lee C."/>
            <person name="Dimitrov G."/>
            <person name="Jiang L."/>
            <person name="Qin H."/>
            <person name="Weidman J."/>
            <person name="Tran K."/>
            <person name="Kang K.H."/>
            <person name="Hance I.R."/>
            <person name="Nelson K.E."/>
            <person name="Fraser C.M."/>
        </authorList>
    </citation>
    <scope>NUCLEOTIDE SEQUENCE [LARGE SCALE GENOMIC DNA]</scope>
    <source>
        <strain>ATCC 35984 / DSM 28319 / BCRC 17069 / CCUG 31568 / BM 3577 / RP62A</strain>
    </source>
</reference>
<feature type="chain" id="PRO_0000124993" description="Large ribosomal subunit protein uL5">
    <location>
        <begin position="1"/>
        <end position="179"/>
    </location>
</feature>
<comment type="function">
    <text evidence="1">This is one of the proteins that bind and probably mediate the attachment of the 5S RNA into the large ribosomal subunit, where it forms part of the central protuberance. In the 70S ribosome it contacts protein S13 of the 30S subunit (bridge B1b), connecting the 2 subunits; this bridge is implicated in subunit movement. Contacts the P site tRNA; the 5S rRNA and some of its associated proteins might help stabilize positioning of ribosome-bound tRNAs.</text>
</comment>
<comment type="subunit">
    <text evidence="1">Part of the 50S ribosomal subunit; part of the 5S rRNA/L5/L18/L25 subcomplex. Contacts the 5S rRNA and the P site tRNA. Forms a bridge to the 30S subunit in the 70S ribosome.</text>
</comment>
<comment type="similarity">
    <text evidence="1">Belongs to the universal ribosomal protein uL5 family.</text>
</comment>
<keyword id="KW-1185">Reference proteome</keyword>
<keyword id="KW-0687">Ribonucleoprotein</keyword>
<keyword id="KW-0689">Ribosomal protein</keyword>
<keyword id="KW-0694">RNA-binding</keyword>
<keyword id="KW-0699">rRNA-binding</keyword>
<keyword id="KW-0820">tRNA-binding</keyword>
<sequence length="179" mass="20236">MNRLKEKFNTEVTENLVKKFNYSSVMEVPKIEKIVVNMGVGDAVQNSKVLDNAVEELELITGQKPLVTKAKKSVATFRLREGMPIGAKVTLRGERMYEFLDKLIAVSLPRVRDFQGVSKTAFDGRGNYTLGVKEQLIFPEIDYDKVTKVRGMDIVIVTTANTDEEARELLTNFGMPFRK</sequence>
<evidence type="ECO:0000255" key="1">
    <source>
        <dbReference type="HAMAP-Rule" id="MF_01333"/>
    </source>
</evidence>
<evidence type="ECO:0000305" key="2"/>
<accession>Q5HM11</accession>
<proteinExistence type="inferred from homology"/>
<protein>
    <recommendedName>
        <fullName evidence="1">Large ribosomal subunit protein uL5</fullName>
    </recommendedName>
    <alternativeName>
        <fullName evidence="2">50S ribosomal protein L5</fullName>
    </alternativeName>
</protein>
<name>RL5_STAEQ</name>
<organism>
    <name type="scientific">Staphylococcus epidermidis (strain ATCC 35984 / DSM 28319 / BCRC 17069 / CCUG 31568 / BM 3577 / RP62A)</name>
    <dbReference type="NCBI Taxonomy" id="176279"/>
    <lineage>
        <taxon>Bacteria</taxon>
        <taxon>Bacillati</taxon>
        <taxon>Bacillota</taxon>
        <taxon>Bacilli</taxon>
        <taxon>Bacillales</taxon>
        <taxon>Staphylococcaceae</taxon>
        <taxon>Staphylococcus</taxon>
    </lineage>
</organism>
<gene>
    <name evidence="1" type="primary">rplE</name>
    <name type="ordered locus">SERP1819</name>
</gene>